<comment type="function">
    <text evidence="5 6 7 9 10 11">RNA-binding protein that affects the localization and the translation of a subset of mRNA. May play a role in adipogenesis through binding to the 3'-UTR of CEBPA mRNA and regulation of its translation. Targets ITPR1 mRNA to dendrites in Purkinje cells, and may regulate its activity-dependent translation. With ELAVL1, binds the 3'-UTR of p53/TP53 mRNAs to control their nuclear export induced by CDKN2A. Hence, may regulate p53/TP53 expression and mediate in part the CDKN2A anti-proliferative activity. May also bind CCNB1 mRNA. Alternatively, may also regulate p53/TP53 activity through direct protein-protein interaction. Interacts with p53/TP53 and promotes cell-cycle arrest over apoptosis enhancing preferentially the DNA binding and transactivation of p53/TP53 on cell-cycle arrest target genes over proapoptotic target genes. May also regulate the ubiquitination and stability of CDKN1A promoting DNA damage-induced cell cycle arrest. Also plays a role in megakaryocytes differentiation.</text>
</comment>
<comment type="subunit">
    <text evidence="9 11">Interacts with p53/TP53; the interaction is direct and enhances p53/TP53 transactivation functions on cell-cycle arrest target genes, resulting in growth arrest. Interacts with ELAVL1; the interaction is indirect, mRNA-dependent and may regulate p53/TP53 expression.</text>
</comment>
<comment type="subcellular location">
    <subcellularLocation>
        <location evidence="6">Cytoplasm</location>
    </subcellularLocation>
    <subcellularLocation>
        <location evidence="1">Nucleus</location>
        <location evidence="1">Nucleolus</location>
    </subcellularLocation>
    <subcellularLocation>
        <location evidence="6">Cell projection</location>
        <location evidence="6">Dendrite</location>
    </subcellularLocation>
    <text>Detected in dendrites of Purkinje cells and hippocampal neurons.</text>
</comment>
<comment type="alternative products">
    <event type="alternative splicing"/>
    <isoform>
        <id>Q8VD12-1</id>
        <name>1</name>
        <sequence type="displayed"/>
    </isoform>
    <isoform>
        <id>Q8VD12-2</id>
        <name>2</name>
        <sequence type="described" ref="VSP_047450"/>
    </isoform>
</comment>
<comment type="tissue specificity">
    <text evidence="4 5 6 10">Expressed in brain and testis (at protein level). In brain, the expression is located to olfactory bulb, cerebral cortex, hippocampus, satellite cells and Purkinje cells of the cerebellum molecular layer. Detected in bone marrow, white and brown adipose tissue, lung and at lower levels in the thymus.</text>
</comment>
<comment type="developmental stage">
    <text evidence="4 10">At 14.5 dpc, expressed in large polynucleated cells within the liver. Induced during adipogenesis.</text>
</comment>
<comment type="induction">
    <text evidence="7 9">By p53/TP53 in response to DNA damage.</text>
</comment>
<comment type="PTM">
    <text evidence="1">Ubiquitinated upon prolonged exposure to genotoxic stress, which leads to proteasomal degradation of ZNF385A and releases p53/TP53 from cell-cycle arrest target gene promoters.</text>
</comment>
<comment type="disruption phenotype">
    <text evidence="5 8 10">No visible phenotype at birth. Between 2-3 weeks after birth, some lethality is observed, may be due to internal hemorrhaging mainly in brain and gastrointestinal tracts. Surviving mutants are fertile and smaller than their wild-type littermates. Deficiency alters hemostasis which is associated with a block in the formation of alpha-granules in megakaryocytes and abnormal platelet morphology. Mice also exhibit tremor, ataxic gate, tilted head, severe impairments in motor coordination and motor learning related to cerebellar functions. Mice show functional deregulation of adipose tissues, although the total fat mass is not affected. They express lower levels of C/EBP alpha in adipose tissue, have impaired glucose tolerance with high plasma insulin levels and plasma adiponectin levels are significantly lower. Upon genotoxic stress, skin and prostate show increased apoptosis.</text>
</comment>
<comment type="sequence caution" evidence="13">
    <conflict type="frameshift">
        <sequence resource="EMBL-CDS" id="AAF24093"/>
    </conflict>
</comment>
<name>Z385A_MOUSE</name>
<keyword id="KW-0025">Alternative splicing</keyword>
<keyword id="KW-0131">Cell cycle</keyword>
<keyword id="KW-0966">Cell projection</keyword>
<keyword id="KW-0963">Cytoplasm</keyword>
<keyword id="KW-0227">DNA damage</keyword>
<keyword id="KW-0479">Metal-binding</keyword>
<keyword id="KW-0539">Nucleus</keyword>
<keyword id="KW-0597">Phosphoprotein</keyword>
<keyword id="KW-1185">Reference proteome</keyword>
<keyword id="KW-0677">Repeat</keyword>
<keyword id="KW-0694">RNA-binding</keyword>
<keyword id="KW-0804">Transcription</keyword>
<keyword id="KW-0805">Transcription regulation</keyword>
<keyword id="KW-0810">Translation regulation</keyword>
<keyword id="KW-0832">Ubl conjugation</keyword>
<keyword id="KW-0862">Zinc</keyword>
<keyword id="KW-0863">Zinc-finger</keyword>
<dbReference type="EMBL" id="AF118566">
    <property type="protein sequence ID" value="AAF24093.1"/>
    <property type="status" value="ALT_FRAME"/>
    <property type="molecule type" value="mRNA"/>
</dbReference>
<dbReference type="EMBL" id="AC164069">
    <property type="status" value="NOT_ANNOTATED_CDS"/>
    <property type="molecule type" value="Genomic_DNA"/>
</dbReference>
<dbReference type="EMBL" id="CH466550">
    <property type="protein sequence ID" value="EDL03923.1"/>
    <property type="molecule type" value="Genomic_DNA"/>
</dbReference>
<dbReference type="EMBL" id="BC017644">
    <property type="protein sequence ID" value="AAH17644.1"/>
    <property type="molecule type" value="mRNA"/>
</dbReference>
<dbReference type="CCDS" id="CCDS49743.1">
    <molecule id="Q8VD12-1"/>
</dbReference>
<dbReference type="CCDS" id="CCDS88860.1">
    <molecule id="Q8VD12-2"/>
</dbReference>
<dbReference type="RefSeq" id="NP_038894.2">
    <molecule id="Q8VD12-1"/>
    <property type="nucleotide sequence ID" value="NM_013866.2"/>
</dbReference>
<dbReference type="RefSeq" id="XP_006521116.1">
    <molecule id="Q8VD12-2"/>
    <property type="nucleotide sequence ID" value="XM_006521053.3"/>
</dbReference>
<dbReference type="RefSeq" id="XP_006521120.1">
    <property type="nucleotide sequence ID" value="XM_006521057.3"/>
</dbReference>
<dbReference type="RefSeq" id="XP_011243958.1">
    <molecule id="Q8VD12-2"/>
    <property type="nucleotide sequence ID" value="XM_011245656.2"/>
</dbReference>
<dbReference type="BioGRID" id="205894">
    <property type="interactions" value="1"/>
</dbReference>
<dbReference type="FunCoup" id="Q8VD12">
    <property type="interactions" value="520"/>
</dbReference>
<dbReference type="STRING" id="10090.ENSMUSP00000130176"/>
<dbReference type="GlyGen" id="Q8VD12">
    <property type="glycosylation" value="1 site"/>
</dbReference>
<dbReference type="iPTMnet" id="Q8VD12"/>
<dbReference type="PhosphoSitePlus" id="Q8VD12"/>
<dbReference type="SwissPalm" id="Q8VD12"/>
<dbReference type="PaxDb" id="10090-ENSMUSP00000130176"/>
<dbReference type="PeptideAtlas" id="Q8VD12"/>
<dbReference type="ProteomicsDB" id="275333">
    <molecule id="Q8VD12-1"/>
</dbReference>
<dbReference type="ProteomicsDB" id="275334">
    <molecule id="Q8VD12-2"/>
</dbReference>
<dbReference type="Pumba" id="Q8VD12"/>
<dbReference type="Antibodypedia" id="15350">
    <property type="antibodies" value="114 antibodies from 20 providers"/>
</dbReference>
<dbReference type="Ensembl" id="ENSMUST00000168828.3">
    <molecule id="Q8VD12-1"/>
    <property type="protein sequence ID" value="ENSMUSP00000130176.2"/>
    <property type="gene ID" value="ENSMUSG00000000552.11"/>
</dbReference>
<dbReference type="Ensembl" id="ENSMUST00000229373.2">
    <molecule id="Q8VD12-2"/>
    <property type="protein sequence ID" value="ENSMUSP00000155498.2"/>
    <property type="gene ID" value="ENSMUSG00000000552.11"/>
</dbReference>
<dbReference type="GeneID" id="29813"/>
<dbReference type="KEGG" id="mmu:29813"/>
<dbReference type="UCSC" id="uc007xxz.1">
    <molecule id="Q8VD12-1"/>
    <property type="organism name" value="mouse"/>
</dbReference>
<dbReference type="AGR" id="MGI:1352495"/>
<dbReference type="CTD" id="29813"/>
<dbReference type="MGI" id="MGI:1352495">
    <property type="gene designation" value="Zfp385a"/>
</dbReference>
<dbReference type="VEuPathDB" id="HostDB:ENSMUSG00000000552"/>
<dbReference type="eggNOG" id="ENOG502QWH6">
    <property type="taxonomic scope" value="Eukaryota"/>
</dbReference>
<dbReference type="GeneTree" id="ENSGT00940000160876"/>
<dbReference type="HOGENOM" id="CLU_027876_1_0_1"/>
<dbReference type="InParanoid" id="Q8VD12"/>
<dbReference type="OMA" id="ERSFHCQ"/>
<dbReference type="OrthoDB" id="9448812at2759"/>
<dbReference type="PhylomeDB" id="Q8VD12"/>
<dbReference type="TreeFam" id="TF326622"/>
<dbReference type="Reactome" id="R-MMU-6804759">
    <property type="pathway name" value="Regulation of TP53 Activity through Association with Co-factors"/>
</dbReference>
<dbReference type="Reactome" id="R-MMU-69895">
    <property type="pathway name" value="Transcriptional activation of cell cycle inhibitor p21"/>
</dbReference>
<dbReference type="BioGRID-ORCS" id="29813">
    <property type="hits" value="2 hits in 79 CRISPR screens"/>
</dbReference>
<dbReference type="CD-CODE" id="764D0258">
    <property type="entry name" value="Neuronal RNP granule"/>
</dbReference>
<dbReference type="ChiTaRS" id="Zfp385a">
    <property type="organism name" value="mouse"/>
</dbReference>
<dbReference type="PRO" id="PR:Q8VD12"/>
<dbReference type="Proteomes" id="UP000000589">
    <property type="component" value="Chromosome 15"/>
</dbReference>
<dbReference type="RNAct" id="Q8VD12">
    <property type="molecule type" value="protein"/>
</dbReference>
<dbReference type="Bgee" id="ENSMUSG00000000552">
    <property type="expression patterns" value="Expressed in retinal neural layer and 231 other cell types or tissues"/>
</dbReference>
<dbReference type="ExpressionAtlas" id="Q8VD12">
    <property type="expression patterns" value="baseline and differential"/>
</dbReference>
<dbReference type="GO" id="GO:0000785">
    <property type="term" value="C:chromatin"/>
    <property type="evidence" value="ECO:0007669"/>
    <property type="project" value="Ensembl"/>
</dbReference>
<dbReference type="GO" id="GO:0005829">
    <property type="term" value="C:cytosol"/>
    <property type="evidence" value="ECO:0007669"/>
    <property type="project" value="Ensembl"/>
</dbReference>
<dbReference type="GO" id="GO:0030425">
    <property type="term" value="C:dendrite"/>
    <property type="evidence" value="ECO:0000314"/>
    <property type="project" value="MGI"/>
</dbReference>
<dbReference type="GO" id="GO:0043025">
    <property type="term" value="C:neuronal cell body"/>
    <property type="evidence" value="ECO:0000314"/>
    <property type="project" value="MGI"/>
</dbReference>
<dbReference type="GO" id="GO:0005730">
    <property type="term" value="C:nucleolus"/>
    <property type="evidence" value="ECO:0007669"/>
    <property type="project" value="UniProtKB-SubCell"/>
</dbReference>
<dbReference type="GO" id="GO:0005654">
    <property type="term" value="C:nucleoplasm"/>
    <property type="evidence" value="ECO:0007669"/>
    <property type="project" value="Ensembl"/>
</dbReference>
<dbReference type="GO" id="GO:0003730">
    <property type="term" value="F:mRNA 3'-UTR binding"/>
    <property type="evidence" value="ECO:0000314"/>
    <property type="project" value="MGI"/>
</dbReference>
<dbReference type="GO" id="GO:0002039">
    <property type="term" value="F:p53 binding"/>
    <property type="evidence" value="ECO:0007669"/>
    <property type="project" value="Ensembl"/>
</dbReference>
<dbReference type="GO" id="GO:0008270">
    <property type="term" value="F:zinc ion binding"/>
    <property type="evidence" value="ECO:0007669"/>
    <property type="project" value="UniProtKB-KW"/>
</dbReference>
<dbReference type="GO" id="GO:0006915">
    <property type="term" value="P:apoptotic process"/>
    <property type="evidence" value="ECO:0000315"/>
    <property type="project" value="UniProtKB"/>
</dbReference>
<dbReference type="GO" id="GO:0006974">
    <property type="term" value="P:DNA damage response"/>
    <property type="evidence" value="ECO:0000315"/>
    <property type="project" value="UniProtKB"/>
</dbReference>
<dbReference type="GO" id="GO:0007599">
    <property type="term" value="P:hemostasis"/>
    <property type="evidence" value="ECO:0000315"/>
    <property type="project" value="MGI"/>
</dbReference>
<dbReference type="GO" id="GO:0008298">
    <property type="term" value="P:intracellular mRNA localization"/>
    <property type="evidence" value="ECO:0000315"/>
    <property type="project" value="MGI"/>
</dbReference>
<dbReference type="GO" id="GO:0007611">
    <property type="term" value="P:learning or memory"/>
    <property type="evidence" value="ECO:0000315"/>
    <property type="project" value="MGI"/>
</dbReference>
<dbReference type="GO" id="GO:0007626">
    <property type="term" value="P:locomotory behavior"/>
    <property type="evidence" value="ECO:0000315"/>
    <property type="project" value="MGI"/>
</dbReference>
<dbReference type="GO" id="GO:0035855">
    <property type="term" value="P:megakaryocyte development"/>
    <property type="evidence" value="ECO:0000315"/>
    <property type="project" value="MGI"/>
</dbReference>
<dbReference type="GO" id="GO:0010609">
    <property type="term" value="P:mRNA localization resulting in post-transcriptional regulation of gene expression"/>
    <property type="evidence" value="ECO:0000315"/>
    <property type="project" value="MGI"/>
</dbReference>
<dbReference type="GO" id="GO:1902166">
    <property type="term" value="P:negative regulation of intrinsic apoptotic signaling pathway in response to DNA damage by p53 class mediator"/>
    <property type="evidence" value="ECO:0000250"/>
    <property type="project" value="UniProtKB"/>
</dbReference>
<dbReference type="GO" id="GO:0070889">
    <property type="term" value="P:platelet alpha granule organization"/>
    <property type="evidence" value="ECO:0000315"/>
    <property type="project" value="MGI"/>
</dbReference>
<dbReference type="GO" id="GO:0030220">
    <property type="term" value="P:platelet formation"/>
    <property type="evidence" value="ECO:0000315"/>
    <property type="project" value="MGI"/>
</dbReference>
<dbReference type="GO" id="GO:0043517">
    <property type="term" value="P:positive regulation of DNA damage response, signal transduction by p53 class mediator"/>
    <property type="evidence" value="ECO:0000250"/>
    <property type="project" value="UniProtKB"/>
</dbReference>
<dbReference type="GO" id="GO:0045600">
    <property type="term" value="P:positive regulation of fat cell differentiation"/>
    <property type="evidence" value="ECO:0000315"/>
    <property type="project" value="MGI"/>
</dbReference>
<dbReference type="GO" id="GO:2000765">
    <property type="term" value="P:regulation of cytoplasmic translation"/>
    <property type="evidence" value="ECO:0000315"/>
    <property type="project" value="MGI"/>
</dbReference>
<dbReference type="FunFam" id="3.30.160.60:FF:000276">
    <property type="entry name" value="zinc finger protein 385A isoform X3"/>
    <property type="match status" value="1"/>
</dbReference>
<dbReference type="FunFam" id="3.30.160.60:FF:000121">
    <property type="entry name" value="zinc finger protein 385B isoform X1"/>
    <property type="match status" value="1"/>
</dbReference>
<dbReference type="FunFam" id="3.30.160.60:FF:000293">
    <property type="entry name" value="zinc finger protein 385B isoform X3"/>
    <property type="match status" value="1"/>
</dbReference>
<dbReference type="Gene3D" id="3.30.160.60">
    <property type="entry name" value="Classic Zinc Finger"/>
    <property type="match status" value="3"/>
</dbReference>
<dbReference type="InterPro" id="IPR003604">
    <property type="entry name" value="Matrin/U1-like-C_Znf_C2H2"/>
</dbReference>
<dbReference type="InterPro" id="IPR051845">
    <property type="entry name" value="Znf385"/>
</dbReference>
<dbReference type="InterPro" id="IPR036236">
    <property type="entry name" value="Znf_C2H2_sf"/>
</dbReference>
<dbReference type="InterPro" id="IPR013087">
    <property type="entry name" value="Znf_C2H2_type"/>
</dbReference>
<dbReference type="PANTHER" id="PTHR23067">
    <property type="entry name" value="DOUBLE-STRANDED RNA-BINDING ZINC FINGER PROTEIN"/>
    <property type="match status" value="1"/>
</dbReference>
<dbReference type="PANTHER" id="PTHR23067:SF13">
    <property type="entry name" value="ZINC FINGER PROTEIN 385A"/>
    <property type="match status" value="1"/>
</dbReference>
<dbReference type="Pfam" id="PF12874">
    <property type="entry name" value="zf-met"/>
    <property type="match status" value="3"/>
</dbReference>
<dbReference type="SMART" id="SM00355">
    <property type="entry name" value="ZnF_C2H2"/>
    <property type="match status" value="3"/>
</dbReference>
<dbReference type="SMART" id="SM00451">
    <property type="entry name" value="ZnF_U1"/>
    <property type="match status" value="3"/>
</dbReference>
<dbReference type="SUPFAM" id="SSF57667">
    <property type="entry name" value="beta-beta-alpha zinc fingers"/>
    <property type="match status" value="3"/>
</dbReference>
<proteinExistence type="evidence at protein level"/>
<accession>Q8VD12</accession>
<accession>G3UWA5</accession>
<accession>Q9QY68</accession>
<organism>
    <name type="scientific">Mus musculus</name>
    <name type="common">Mouse</name>
    <dbReference type="NCBI Taxonomy" id="10090"/>
    <lineage>
        <taxon>Eukaryota</taxon>
        <taxon>Metazoa</taxon>
        <taxon>Chordata</taxon>
        <taxon>Craniata</taxon>
        <taxon>Vertebrata</taxon>
        <taxon>Euteleostomi</taxon>
        <taxon>Mammalia</taxon>
        <taxon>Eutheria</taxon>
        <taxon>Euarchontoglires</taxon>
        <taxon>Glires</taxon>
        <taxon>Rodentia</taxon>
        <taxon>Myomorpha</taxon>
        <taxon>Muroidea</taxon>
        <taxon>Muridae</taxon>
        <taxon>Murinae</taxon>
        <taxon>Mus</taxon>
        <taxon>Mus</taxon>
    </lineage>
</organism>
<sequence>MILGSLSRAGPLPLLRQPPIMQPPMDLKQILPFPLEPAPTLGLFSNYSTMDPVQKAVLSHTFGGPLLKTKRPVISCNVCQIRFNSQSQAEAHYKGNRHARRVKGIEAAKTRGREPSVRESGDPAPAGSIPPSGDGVAPRPVSMENGLGPAPGSPEKQPGSPSPPSVPESGQGVTKGEGGTSVPASLPGGSKEEEEKAKRLLYCALCKVAVNSLSQLEAHNKGTKHKTILEARSGLGPIKAYPRLGPPTPGEPEAPAQDRTFHCEICNVKVNSEVQLKQHISSRRHRDGVAGKPNPLLSRHKKPRGAAELAGTLTFSKELPKSLAGGLLPSPLAVAAVMAAAAGSPLSLRPAPAAPLLQGPPITHPLLHPAPGPIRTAHGPILFSPY</sequence>
<evidence type="ECO:0000250" key="1"/>
<evidence type="ECO:0000250" key="2">
    <source>
        <dbReference type="UniProtKB" id="Q96PM9"/>
    </source>
</evidence>
<evidence type="ECO:0000256" key="3">
    <source>
        <dbReference type="SAM" id="MobiDB-lite"/>
    </source>
</evidence>
<evidence type="ECO:0000269" key="4">
    <source>
    </source>
</evidence>
<evidence type="ECO:0000269" key="5">
    <source>
    </source>
</evidence>
<evidence type="ECO:0000269" key="6">
    <source>
    </source>
</evidence>
<evidence type="ECO:0000269" key="7">
    <source>
    </source>
</evidence>
<evidence type="ECO:0000269" key="8">
    <source>
    </source>
</evidence>
<evidence type="ECO:0000269" key="9">
    <source>
    </source>
</evidence>
<evidence type="ECO:0000269" key="10">
    <source>
    </source>
</evidence>
<evidence type="ECO:0000269" key="11">
    <source>
    </source>
</evidence>
<evidence type="ECO:0000303" key="12">
    <source>
    </source>
</evidence>
<evidence type="ECO:0000305" key="13"/>
<reference key="1">
    <citation type="journal article" date="2000" name="Mech. Dev.">
        <title>Gene trapping of two novel genes, Hzf and Hhl, expressed in hematopoietic cells.</title>
        <authorList>
            <person name="Hidaka M."/>
            <person name="Caruana G."/>
            <person name="Stanford W.L."/>
            <person name="Sam M."/>
            <person name="Correll P.H."/>
            <person name="Bernstein A."/>
        </authorList>
    </citation>
    <scope>NUCLEOTIDE SEQUENCE [MRNA] (ISOFORM 1)</scope>
    <scope>DEVELOPMENTAL STAGE</scope>
    <scope>TISSUE SPECIFICITY</scope>
</reference>
<reference key="2">
    <citation type="journal article" date="2009" name="PLoS Biol.">
        <title>Lineage-specific biology revealed by a finished genome assembly of the mouse.</title>
        <authorList>
            <person name="Church D.M."/>
            <person name="Goodstadt L."/>
            <person name="Hillier L.W."/>
            <person name="Zody M.C."/>
            <person name="Goldstein S."/>
            <person name="She X."/>
            <person name="Bult C.J."/>
            <person name="Agarwala R."/>
            <person name="Cherry J.L."/>
            <person name="DiCuccio M."/>
            <person name="Hlavina W."/>
            <person name="Kapustin Y."/>
            <person name="Meric P."/>
            <person name="Maglott D."/>
            <person name="Birtle Z."/>
            <person name="Marques A.C."/>
            <person name="Graves T."/>
            <person name="Zhou S."/>
            <person name="Teague B."/>
            <person name="Potamousis K."/>
            <person name="Churas C."/>
            <person name="Place M."/>
            <person name="Herschleb J."/>
            <person name="Runnheim R."/>
            <person name="Forrest D."/>
            <person name="Amos-Landgraf J."/>
            <person name="Schwartz D.C."/>
            <person name="Cheng Z."/>
            <person name="Lindblad-Toh K."/>
            <person name="Eichler E.E."/>
            <person name="Ponting C.P."/>
        </authorList>
    </citation>
    <scope>NUCLEOTIDE SEQUENCE [LARGE SCALE GENOMIC DNA]</scope>
    <source>
        <strain>C57BL/6J</strain>
    </source>
</reference>
<reference key="3">
    <citation type="submission" date="2005-09" db="EMBL/GenBank/DDBJ databases">
        <authorList>
            <person name="Mural R.J."/>
            <person name="Adams M.D."/>
            <person name="Myers E.W."/>
            <person name="Smith H.O."/>
            <person name="Venter J.C."/>
        </authorList>
    </citation>
    <scope>NUCLEOTIDE SEQUENCE [LARGE SCALE GENOMIC DNA]</scope>
</reference>
<reference key="4">
    <citation type="journal article" date="2004" name="Genome Res.">
        <title>The status, quality, and expansion of the NIH full-length cDNA project: the Mammalian Gene Collection (MGC).</title>
        <authorList>
            <consortium name="The MGC Project Team"/>
        </authorList>
    </citation>
    <scope>NUCLEOTIDE SEQUENCE [LARGE SCALE MRNA] (ISOFORM 2)</scope>
</reference>
<reference key="5">
    <citation type="journal article" date="2002" name="J. Exp. Med.">
        <title>Zinc finger protein, Hzf, is required for megakaryocyte development and hemostasis.</title>
        <authorList>
            <person name="Kimura Y."/>
            <person name="Hart A."/>
            <person name="Hirashima M."/>
            <person name="Wang C."/>
            <person name="Holmyard D."/>
            <person name="Pittman J."/>
            <person name="Pang X.L."/>
            <person name="Jackson C.W."/>
            <person name="Bernstein A."/>
        </authorList>
    </citation>
    <scope>FUNCTION IN MEGAKARYOCYTE DEVELOPMENT</scope>
    <scope>DISRUPTION PHENOTYPE</scope>
    <scope>TISSUE SPECIFICITY</scope>
</reference>
<reference key="6">
    <citation type="journal article" date="2005" name="Proc. Natl. Acad. Sci. U.S.A.">
        <title>Hzf protein regulates dendritic localization and BDNF-induced translation of type 1 inositol 1,4,5-trisphosphate receptor mRNA.</title>
        <authorList>
            <person name="Iijima T."/>
            <person name="Imai T."/>
            <person name="Kimura Y."/>
            <person name="Bernstein A."/>
            <person name="Okano H.J."/>
            <person name="Yuzaki M."/>
            <person name="Okano H."/>
        </authorList>
    </citation>
    <scope>FUNCTION IN MRNA LOCALIZATION</scope>
    <scope>RNA-BINDING</scope>
    <scope>SUBCELLULAR LOCATION</scope>
    <scope>TISSUE SPECIFICITY</scope>
</reference>
<reference key="7">
    <citation type="journal article" date="2006" name="Mol. Cell. Biol.">
        <title>Hzf, a p53-responsive gene, regulates maintenance of the G2 phase checkpoint induced by DNA damage.</title>
        <authorList>
            <person name="Sugimoto M."/>
            <person name="Gromley A."/>
            <person name="Sherr C.J."/>
        </authorList>
    </citation>
    <scope>FUNCTION IN TP53-DEPENDENT CELL CYCLE ARREST</scope>
    <scope>INDUCTION BY DNA DAMAGE</scope>
</reference>
<reference key="8">
    <citation type="journal article" date="2007" name="Cell">
        <title>Hzf Determines cell survival upon genotoxic stress by modulating p53 transactivation.</title>
        <authorList>
            <person name="Das S."/>
            <person name="Raj L."/>
            <person name="Zhao B."/>
            <person name="Kimura Y."/>
            <person name="Bernstein A."/>
            <person name="Aaronson S.A."/>
            <person name="Lee S.W."/>
        </authorList>
    </citation>
    <scope>FUNCTION IN TP53-DEPENDENT CELL CYCLE ARREST</scope>
    <scope>INTERACTION WITH TP53</scope>
    <scope>INDUCTION BY DNA DAMAGE</scope>
</reference>
<reference key="9">
    <citation type="journal article" date="2007" name="Neurosci. Res.">
        <title>Impaired motor functions in mice lacking the RNA-binding protein Hzf.</title>
        <authorList>
            <person name="Iijima T."/>
            <person name="Ogura H."/>
            <person name="Takatsuki K."/>
            <person name="Kawahara S."/>
            <person name="Wakabayashi K."/>
            <person name="Nakayama D."/>
            <person name="Fujioka M."/>
            <person name="Kimura Y."/>
            <person name="Bernstein A."/>
            <person name="Okano H.J."/>
            <person name="Kirino Y."/>
            <person name="Okano H."/>
        </authorList>
    </citation>
    <scope>DISRUPTION PHENOTYPE</scope>
</reference>
<reference key="10">
    <citation type="journal article" date="2008" name="EMBO J.">
        <title>Hzf regulates adipogenesis through translational control of C/EBPalpha.</title>
        <authorList>
            <person name="Kawagishi H."/>
            <person name="Wakoh T."/>
            <person name="Uno H."/>
            <person name="Maruyama M."/>
            <person name="Moriya A."/>
            <person name="Morikawa S."/>
            <person name="Okano H."/>
            <person name="Sherr C.J."/>
            <person name="Takagi M."/>
            <person name="Sugimoto M."/>
        </authorList>
    </citation>
    <scope>FUNCTION IN ADIPOGENESIS</scope>
    <scope>RNA-BINDING</scope>
    <scope>DISRUPTION PHENOTYPE</scope>
    <scope>TISSUE SPECIFICITY</scope>
    <scope>DEVELOPMENTAL STAGE</scope>
</reference>
<reference key="11">
    <citation type="journal article" date="2011" name="Mol. Cell. Biol.">
        <title>Cooperative role of the RNA-binding proteins Hzf and HuR in p53 activation.</title>
        <authorList>
            <person name="Nakamura H."/>
            <person name="Kawagishi H."/>
            <person name="Watanabe A."/>
            <person name="Sugimoto K."/>
            <person name="Maruyama M."/>
            <person name="Sugimoto M."/>
        </authorList>
    </citation>
    <scope>FUNCTION IN MRNA LOCALIZATION</scope>
    <scope>RNA-BINDING</scope>
    <scope>INTERACTION WITH ELAVL1</scope>
</reference>
<gene>
    <name type="primary">Znf385a</name>
    <name type="synonym">Hzf</name>
    <name type="synonym">Zfp385a</name>
</gene>
<feature type="chain" id="PRO_0000422970" description="Zinc finger protein 385A">
    <location>
        <begin position="1"/>
        <end position="386"/>
    </location>
</feature>
<feature type="zinc finger region" description="Matrin-type 1">
    <location>
        <begin position="74"/>
        <end position="98"/>
    </location>
</feature>
<feature type="zinc finger region" description="Matrin-type 2">
    <location>
        <begin position="201"/>
        <end position="225"/>
    </location>
</feature>
<feature type="zinc finger region" description="Matrin-type 3">
    <location>
        <begin position="261"/>
        <end position="285"/>
    </location>
</feature>
<feature type="region of interest" description="Disordered" evidence="3">
    <location>
        <begin position="88"/>
        <end position="193"/>
    </location>
</feature>
<feature type="region of interest" description="Necessary for binding to ITPR1, CEBPA and p53/TP53 mRNAs">
    <location>
        <begin position="145"/>
        <end position="351"/>
    </location>
</feature>
<feature type="region of interest" description="Disordered" evidence="3">
    <location>
        <begin position="279"/>
        <end position="305"/>
    </location>
</feature>
<feature type="compositionally biased region" description="Basic and acidic residues" evidence="3">
    <location>
        <begin position="103"/>
        <end position="121"/>
    </location>
</feature>
<feature type="modified residue" description="Phosphoserine" evidence="2">
    <location>
        <position position="185"/>
    </location>
</feature>
<feature type="modified residue" description="Phosphothreonine" evidence="2">
    <location>
        <position position="248"/>
    </location>
</feature>
<feature type="splice variant" id="VSP_047450" description="In isoform 2." evidence="12">
    <original>MILGSLSRAGPLPLLRQPPIM</original>
    <variation>M</variation>
    <location>
        <begin position="1"/>
        <end position="21"/>
    </location>
</feature>
<feature type="sequence conflict" description="In Ref. 1; AAF24093." evidence="13" ref="1">
    <original>R</original>
    <variation>G</variation>
    <location>
        <position position="232"/>
    </location>
</feature>
<feature type="sequence conflict" description="In Ref. 1; AAF24093." evidence="13" ref="1">
    <original>P</original>
    <variation>A</variation>
    <location>
        <position position="237"/>
    </location>
</feature>
<feature type="sequence conflict" description="In Ref. 1; AAF24093." evidence="13" ref="1">
    <original>L</original>
    <variation>V</variation>
    <location>
        <position position="244"/>
    </location>
</feature>
<feature type="sequence conflict" description="In Ref. 1; AAF24093." evidence="13" ref="1">
    <location>
        <position position="246"/>
    </location>
</feature>
<feature type="sequence conflict" description="In Ref. 1; AAF24093." evidence="13" ref="1">
    <original>TP</original>
    <variation>NS</variation>
    <location>
        <begin position="248"/>
        <end position="249"/>
    </location>
</feature>
<feature type="sequence conflict" description="In Ref. 1; AAF24093." evidence="13" ref="1">
    <original>R</original>
    <variation>G</variation>
    <location>
        <position position="259"/>
    </location>
</feature>
<protein>
    <recommendedName>
        <fullName>Zinc finger protein 385A</fullName>
    </recommendedName>
    <alternativeName>
        <fullName>Hematopoietic zinc finger protein</fullName>
    </alternativeName>
</protein>